<reference key="1">
    <citation type="journal article" date="2007" name="PLoS Genet.">
        <title>The complete genome sequence of Yersinia pseudotuberculosis IP31758, the causative agent of Far East scarlet-like fever.</title>
        <authorList>
            <person name="Eppinger M."/>
            <person name="Rosovitz M.J."/>
            <person name="Fricke W.F."/>
            <person name="Rasko D.A."/>
            <person name="Kokorina G."/>
            <person name="Fayolle C."/>
            <person name="Lindler L.E."/>
            <person name="Carniel E."/>
            <person name="Ravel J."/>
        </authorList>
    </citation>
    <scope>NUCLEOTIDE SEQUENCE [LARGE SCALE GENOMIC DNA]</scope>
    <source>
        <strain>IP 31758</strain>
    </source>
</reference>
<gene>
    <name evidence="1" type="primary">ibpA</name>
    <name type="ordered locus">YpsIP31758_4143</name>
</gene>
<keyword id="KW-0143">Chaperone</keyword>
<keyword id="KW-0963">Cytoplasm</keyword>
<keyword id="KW-0346">Stress response</keyword>
<accession>A7FPA8</accession>
<protein>
    <recommendedName>
        <fullName evidence="1">Small heat shock protein IbpA</fullName>
    </recommendedName>
    <alternativeName>
        <fullName evidence="1">16 kDa heat shock protein A</fullName>
    </alternativeName>
</protein>
<feature type="chain" id="PRO_1000070879" description="Small heat shock protein IbpA">
    <location>
        <begin position="1"/>
        <end position="137"/>
    </location>
</feature>
<feature type="domain" description="sHSP" evidence="2">
    <location>
        <begin position="28"/>
        <end position="137"/>
    </location>
</feature>
<dbReference type="EMBL" id="CP000720">
    <property type="protein sequence ID" value="ABS48396.1"/>
    <property type="molecule type" value="Genomic_DNA"/>
</dbReference>
<dbReference type="RefSeq" id="WP_002209636.1">
    <property type="nucleotide sequence ID" value="NC_009708.1"/>
</dbReference>
<dbReference type="SMR" id="A7FPA8"/>
<dbReference type="GeneID" id="96663430"/>
<dbReference type="KEGG" id="ypi:YpsIP31758_4143"/>
<dbReference type="HOGENOM" id="CLU_046737_4_2_6"/>
<dbReference type="Proteomes" id="UP000002412">
    <property type="component" value="Chromosome"/>
</dbReference>
<dbReference type="GO" id="GO:0005737">
    <property type="term" value="C:cytoplasm"/>
    <property type="evidence" value="ECO:0007669"/>
    <property type="project" value="UniProtKB-SubCell"/>
</dbReference>
<dbReference type="GO" id="GO:0050821">
    <property type="term" value="P:protein stabilization"/>
    <property type="evidence" value="ECO:0007669"/>
    <property type="project" value="UniProtKB-UniRule"/>
</dbReference>
<dbReference type="CDD" id="cd06470">
    <property type="entry name" value="ACD_IbpA-B_like"/>
    <property type="match status" value="1"/>
</dbReference>
<dbReference type="FunFam" id="2.60.40.790:FF:000002">
    <property type="entry name" value="Small heat shock protein IbpA"/>
    <property type="match status" value="1"/>
</dbReference>
<dbReference type="Gene3D" id="2.60.40.790">
    <property type="match status" value="1"/>
</dbReference>
<dbReference type="HAMAP" id="MF_02000">
    <property type="entry name" value="HSP20_IbpA"/>
    <property type="match status" value="1"/>
</dbReference>
<dbReference type="InterPro" id="IPR002068">
    <property type="entry name" value="A-crystallin/Hsp20_dom"/>
</dbReference>
<dbReference type="InterPro" id="IPR037913">
    <property type="entry name" value="ACD_IbpA/B"/>
</dbReference>
<dbReference type="InterPro" id="IPR008978">
    <property type="entry name" value="HSP20-like_chaperone"/>
</dbReference>
<dbReference type="InterPro" id="IPR023728">
    <property type="entry name" value="HSP20_IbpA"/>
</dbReference>
<dbReference type="NCBIfam" id="NF008013">
    <property type="entry name" value="PRK10743.1"/>
    <property type="match status" value="1"/>
</dbReference>
<dbReference type="PANTHER" id="PTHR47062">
    <property type="match status" value="1"/>
</dbReference>
<dbReference type="PANTHER" id="PTHR47062:SF1">
    <property type="entry name" value="SMALL HEAT SHOCK PROTEIN IBPA"/>
    <property type="match status" value="1"/>
</dbReference>
<dbReference type="Pfam" id="PF00011">
    <property type="entry name" value="HSP20"/>
    <property type="match status" value="1"/>
</dbReference>
<dbReference type="SUPFAM" id="SSF49764">
    <property type="entry name" value="HSP20-like chaperones"/>
    <property type="match status" value="1"/>
</dbReference>
<dbReference type="PROSITE" id="PS01031">
    <property type="entry name" value="SHSP"/>
    <property type="match status" value="1"/>
</dbReference>
<comment type="function">
    <text evidence="1">Associates with aggregated proteins, together with IbpB, to stabilize and protect them from irreversible denaturation and extensive proteolysis during heat shock and oxidative stress. Aggregated proteins bound to the IbpAB complex are more efficiently refolded and reactivated by the ATP-dependent chaperone systems ClpB and DnaK/DnaJ/GrpE. Its activity is ATP-independent.</text>
</comment>
<comment type="subunit">
    <text evidence="1">Monomer. Forms homomultimers of about 100-150 subunits at optimal growth temperatures. Conformation changes to monomers at high temperatures or high ionic concentrations.</text>
</comment>
<comment type="subcellular location">
    <subcellularLocation>
        <location evidence="1">Cytoplasm</location>
    </subcellularLocation>
</comment>
<comment type="similarity">
    <text evidence="1 2">Belongs to the small heat shock protein (HSP20) family.</text>
</comment>
<evidence type="ECO:0000255" key="1">
    <source>
        <dbReference type="HAMAP-Rule" id="MF_02000"/>
    </source>
</evidence>
<evidence type="ECO:0000255" key="2">
    <source>
        <dbReference type="PROSITE-ProRule" id="PRU00285"/>
    </source>
</evidence>
<name>IBPA_YERP3</name>
<sequence length="137" mass="15648">MRNSDLAPLYRSAIGFDRLFNLLESGQNQSNGGYPPYNVELVDENNYRIAIAVAGFAEQELEITTQDNLLIVRGSHANEPAQRTYLYQGIAERNFERKFQLAEHIKIKGANLVNGLLYIDLERLVPESLKPRRIEIK</sequence>
<organism>
    <name type="scientific">Yersinia pseudotuberculosis serotype O:1b (strain IP 31758)</name>
    <dbReference type="NCBI Taxonomy" id="349747"/>
    <lineage>
        <taxon>Bacteria</taxon>
        <taxon>Pseudomonadati</taxon>
        <taxon>Pseudomonadota</taxon>
        <taxon>Gammaproteobacteria</taxon>
        <taxon>Enterobacterales</taxon>
        <taxon>Yersiniaceae</taxon>
        <taxon>Yersinia</taxon>
    </lineage>
</organism>
<proteinExistence type="inferred from homology"/>